<keyword id="KW-0009">Actin-binding</keyword>
<keyword id="KW-0020">Allergen</keyword>
<keyword id="KW-0963">Cytoplasm</keyword>
<keyword id="KW-0206">Cytoskeleton</keyword>
<feature type="initiator methionine" description="Removed" evidence="1">
    <location>
        <position position="1"/>
    </location>
</feature>
<feature type="chain" id="PRO_0000199670" description="Profilin">
    <location>
        <begin position="2"/>
        <end position="131"/>
    </location>
</feature>
<accession>Q9XF38</accession>
<name>PROF_PYRCO</name>
<comment type="function">
    <text evidence="1">Binds to actin and affects the structure of the cytoskeleton. At high concentrations, profilin prevents the polymerization of actin, whereas it enhances it at low concentrations. By binding to PIP2, it inhibits the formation of IP3 and DG (By similarity).</text>
</comment>
<comment type="subunit">
    <text>Occurs in many kinds of cells as a complex with monomeric actin in a 1:1 ratio.</text>
</comment>
<comment type="subcellular location">
    <subcellularLocation>
        <location evidence="1">Cytoplasm</location>
        <location evidence="1">Cytoskeleton</location>
    </subcellularLocation>
</comment>
<comment type="allergen">
    <text evidence="2">Causes an allergic reaction in human. Food allergen.</text>
</comment>
<comment type="similarity">
    <text evidence="3">Belongs to the profilin family.</text>
</comment>
<reference key="1">
    <citation type="journal article" date="2001" name="J. Chromatogr. B">
        <title>Cross-reactivity within the profilin panallergen family investigated by comparison of recombinant profilins from pear (Pyr c 4), cherry (Pru av 4) and celery (Api g 4) with birch pollen profilin Bet v 2.</title>
        <authorList>
            <person name="Scheurer S."/>
            <person name="Wangorsch A."/>
            <person name="Nerkamp J."/>
            <person name="Skov P.S."/>
            <person name="Ballmer-Weber B."/>
            <person name="Wuthrich B."/>
            <person name="Haustein D."/>
            <person name="Vieths S."/>
        </authorList>
    </citation>
    <scope>NUCLEOTIDE SEQUENCE [MRNA]</scope>
    <scope>ALLERGEN</scope>
    <source>
        <strain>cv. Williams</strain>
    </source>
</reference>
<sequence length="131" mass="14064">MSWQAYVDDHLMCDIDGHHLTAAAILGHDGSVWAQSSTFPKFKPEEITAIMKDFDEPGSLAPTGLHLGGTKYMVIQGEGGAVIRGKKGSGGVTVKKTSQALVFGIYEEPLTPGQCNMIVERLGDYLIDQGL</sequence>
<organism>
    <name type="scientific">Pyrus communis</name>
    <name type="common">Pear</name>
    <name type="synonym">Pyrus domestica</name>
    <dbReference type="NCBI Taxonomy" id="23211"/>
    <lineage>
        <taxon>Eukaryota</taxon>
        <taxon>Viridiplantae</taxon>
        <taxon>Streptophyta</taxon>
        <taxon>Embryophyta</taxon>
        <taxon>Tracheophyta</taxon>
        <taxon>Spermatophyta</taxon>
        <taxon>Magnoliopsida</taxon>
        <taxon>eudicotyledons</taxon>
        <taxon>Gunneridae</taxon>
        <taxon>Pentapetalae</taxon>
        <taxon>rosids</taxon>
        <taxon>fabids</taxon>
        <taxon>Rosales</taxon>
        <taxon>Rosaceae</taxon>
        <taxon>Amygdaloideae</taxon>
        <taxon>Maleae</taxon>
        <taxon>Pyrus</taxon>
    </lineage>
</organism>
<evidence type="ECO:0000250" key="1"/>
<evidence type="ECO:0000269" key="2">
    <source>
    </source>
</evidence>
<evidence type="ECO:0000305" key="3"/>
<protein>
    <recommendedName>
        <fullName>Profilin</fullName>
    </recommendedName>
    <alternativeName>
        <fullName>Allergen Pyr c 3</fullName>
    </alternativeName>
    <allergenName>Pyr c 4</allergenName>
</protein>
<dbReference type="EMBL" id="AF129424">
    <property type="protein sequence ID" value="AAD29410.1"/>
    <property type="molecule type" value="mRNA"/>
</dbReference>
<dbReference type="SMR" id="Q9XF38"/>
<dbReference type="Allergome" id="3459">
    <property type="allergen name" value="Pyr c 4.0101"/>
</dbReference>
<dbReference type="Allergome" id="608">
    <property type="allergen name" value="Pyr c 4"/>
</dbReference>
<dbReference type="GO" id="GO:0005938">
    <property type="term" value="C:cell cortex"/>
    <property type="evidence" value="ECO:0007669"/>
    <property type="project" value="TreeGrafter"/>
</dbReference>
<dbReference type="GO" id="GO:0005856">
    <property type="term" value="C:cytoskeleton"/>
    <property type="evidence" value="ECO:0007669"/>
    <property type="project" value="UniProtKB-SubCell"/>
</dbReference>
<dbReference type="GO" id="GO:0003785">
    <property type="term" value="F:actin monomer binding"/>
    <property type="evidence" value="ECO:0007669"/>
    <property type="project" value="TreeGrafter"/>
</dbReference>
<dbReference type="CDD" id="cd00148">
    <property type="entry name" value="PROF"/>
    <property type="match status" value="1"/>
</dbReference>
<dbReference type="FunFam" id="3.30.450.30:FF:000001">
    <property type="entry name" value="Profilin"/>
    <property type="match status" value="1"/>
</dbReference>
<dbReference type="Gene3D" id="3.30.450.30">
    <property type="entry name" value="Dynein light chain 2a, cytoplasmic"/>
    <property type="match status" value="1"/>
</dbReference>
<dbReference type="InterPro" id="IPR048278">
    <property type="entry name" value="PFN"/>
</dbReference>
<dbReference type="InterPro" id="IPR005455">
    <property type="entry name" value="PFN_euk"/>
</dbReference>
<dbReference type="InterPro" id="IPR036140">
    <property type="entry name" value="PFN_sf"/>
</dbReference>
<dbReference type="InterPro" id="IPR027310">
    <property type="entry name" value="Profilin_CS"/>
</dbReference>
<dbReference type="PANTHER" id="PTHR11604">
    <property type="entry name" value="PROFILIN"/>
    <property type="match status" value="1"/>
</dbReference>
<dbReference type="PANTHER" id="PTHR11604:SF35">
    <property type="entry name" value="PROFILIN-3"/>
    <property type="match status" value="1"/>
</dbReference>
<dbReference type="Pfam" id="PF00235">
    <property type="entry name" value="Profilin"/>
    <property type="match status" value="1"/>
</dbReference>
<dbReference type="PRINTS" id="PR00392">
    <property type="entry name" value="PROFILIN"/>
</dbReference>
<dbReference type="PRINTS" id="PR01640">
    <property type="entry name" value="PROFILINPLNT"/>
</dbReference>
<dbReference type="SMART" id="SM00392">
    <property type="entry name" value="PROF"/>
    <property type="match status" value="1"/>
</dbReference>
<dbReference type="SUPFAM" id="SSF55770">
    <property type="entry name" value="Profilin (actin-binding protein)"/>
    <property type="match status" value="1"/>
</dbReference>
<dbReference type="PROSITE" id="PS00414">
    <property type="entry name" value="PROFILIN"/>
    <property type="match status" value="1"/>
</dbReference>
<proteinExistence type="evidence at protein level"/>